<name>H32_TETLE</name>
<evidence type="ECO:0000250" key="1"/>
<evidence type="ECO:0000256" key="2">
    <source>
        <dbReference type="SAM" id="MobiDB-lite"/>
    </source>
</evidence>
<evidence type="ECO:0000305" key="3"/>
<protein>
    <recommendedName>
        <fullName>Histone H3.2</fullName>
    </recommendedName>
</protein>
<comment type="function">
    <text>Core component of nucleosome. Nucleosomes wrap and compact DNA into chromatin, limiting DNA accessibility to the cellular machineries which require DNA as a template. Histones thereby play a central role in transcription regulation, DNA repair, DNA replication and chromosomal stability. DNA accessibility is regulated via a complex set of post-translational modifications of histones, also called histone code, and nucleosome remodeling.</text>
</comment>
<comment type="subunit">
    <text>The nucleosome is a histone octamer containing two molecules each of H2A, H2B, H3 and H4 assembled in one H3-H4 heterotetramer and two H2A-H2B heterodimers. The octamer wraps approximately 147 bp of DNA.</text>
</comment>
<comment type="subcellular location">
    <subcellularLocation>
        <location evidence="1">Nucleus</location>
    </subcellularLocation>
    <subcellularLocation>
        <location evidence="1">Chromosome</location>
    </subcellularLocation>
</comment>
<comment type="similarity">
    <text evidence="3">Belongs to the histone H3 family.</text>
</comment>
<feature type="initiator methionine" description="Removed" evidence="1">
    <location>
        <position position="1"/>
    </location>
</feature>
<feature type="chain" id="PRO_0000221339" description="Histone H3.2">
    <location>
        <begin position="2"/>
        <end position="41" status="greater than"/>
    </location>
</feature>
<feature type="region of interest" description="Disordered" evidence="2">
    <location>
        <begin position="1"/>
        <end position="41"/>
    </location>
</feature>
<feature type="non-terminal residue">
    <location>
        <position position="41"/>
    </location>
</feature>
<reference key="1">
    <citation type="journal article" date="1990" name="Nucleic Acids Res.">
        <title>Characterization of the promoter region of Tetrahymena genes.</title>
        <authorList>
            <person name="Brunk C.F."/>
            <person name="Sadler L.A."/>
        </authorList>
    </citation>
    <scope>NUCLEOTIDE SEQUENCE [GENOMIC DNA]</scope>
</reference>
<reference key="2">
    <citation type="journal article" date="1990" name="J. Mol. Evol.">
        <title>Phylogenetic relationships among Tetrahymena species determined using the polymerase chain reaction.</title>
        <authorList>
            <person name="Brunk C.F."/>
            <person name="Kahn R.W."/>
            <person name="Sadler L.A."/>
        </authorList>
    </citation>
    <scope>NUCLEOTIDE SEQUENCE [GENOMIC DNA]</scope>
</reference>
<dbReference type="EMBL" id="X17134">
    <property type="protein sequence ID" value="CAA35002.1"/>
    <property type="molecule type" value="Genomic_DNA"/>
</dbReference>
<dbReference type="PIR" id="S10277">
    <property type="entry name" value="S10277"/>
</dbReference>
<dbReference type="GO" id="GO:0000786">
    <property type="term" value="C:nucleosome"/>
    <property type="evidence" value="ECO:0007669"/>
    <property type="project" value="UniProtKB-KW"/>
</dbReference>
<dbReference type="GO" id="GO:0005634">
    <property type="term" value="C:nucleus"/>
    <property type="evidence" value="ECO:0007669"/>
    <property type="project" value="UniProtKB-SubCell"/>
</dbReference>
<dbReference type="GO" id="GO:0003677">
    <property type="term" value="F:DNA binding"/>
    <property type="evidence" value="ECO:0007669"/>
    <property type="project" value="UniProtKB-KW"/>
</dbReference>
<dbReference type="GO" id="GO:0046982">
    <property type="term" value="F:protein heterodimerization activity"/>
    <property type="evidence" value="ECO:0007669"/>
    <property type="project" value="InterPro"/>
</dbReference>
<dbReference type="GO" id="GO:0030527">
    <property type="term" value="F:structural constituent of chromatin"/>
    <property type="evidence" value="ECO:0007669"/>
    <property type="project" value="InterPro"/>
</dbReference>
<dbReference type="Gene3D" id="1.10.20.10">
    <property type="entry name" value="Histone, subunit A"/>
    <property type="match status" value="1"/>
</dbReference>
<dbReference type="InterPro" id="IPR009072">
    <property type="entry name" value="Histone-fold"/>
</dbReference>
<dbReference type="InterPro" id="IPR000164">
    <property type="entry name" value="Histone_H3/CENP-A"/>
</dbReference>
<dbReference type="PANTHER" id="PTHR11426">
    <property type="entry name" value="HISTONE H3"/>
    <property type="match status" value="1"/>
</dbReference>
<dbReference type="PRINTS" id="PR00622">
    <property type="entry name" value="HISTONEH3"/>
</dbReference>
<dbReference type="SUPFAM" id="SSF47113">
    <property type="entry name" value="Histone-fold"/>
    <property type="match status" value="1"/>
</dbReference>
<dbReference type="PROSITE" id="PS00322">
    <property type="entry name" value="HISTONE_H3_1"/>
    <property type="match status" value="1"/>
</dbReference>
<accession>P69117</accession>
<accession>P17705</accession>
<keyword id="KW-0158">Chromosome</keyword>
<keyword id="KW-0238">DNA-binding</keyword>
<keyword id="KW-0544">Nucleosome core</keyword>
<keyword id="KW-0539">Nucleus</keyword>
<proteinExistence type="inferred from homology"/>
<sequence length="41" mass="4343">MARTKQTARKSTGAKAPRKQLASKAARKSAPATGGIKKPHR</sequence>
<organism>
    <name type="scientific">Tetrahymena leucophrys</name>
    <dbReference type="NCBI Taxonomy" id="5900"/>
    <lineage>
        <taxon>Eukaryota</taxon>
        <taxon>Sar</taxon>
        <taxon>Alveolata</taxon>
        <taxon>Ciliophora</taxon>
        <taxon>Intramacronucleata</taxon>
        <taxon>Oligohymenophorea</taxon>
        <taxon>Hymenostomatida</taxon>
        <taxon>Tetrahymenina</taxon>
        <taxon>Tetrahymenidae</taxon>
        <taxon>Tetrahymena</taxon>
    </lineage>
</organism>